<organism>
    <name type="scientific">Laccaria bicolor (strain S238N-H82 / ATCC MYA-4686)</name>
    <name type="common">Bicoloured deceiver</name>
    <name type="synonym">Laccaria laccata var. bicolor</name>
    <dbReference type="NCBI Taxonomy" id="486041"/>
    <lineage>
        <taxon>Eukaryota</taxon>
        <taxon>Fungi</taxon>
        <taxon>Dikarya</taxon>
        <taxon>Basidiomycota</taxon>
        <taxon>Agaricomycotina</taxon>
        <taxon>Agaricomycetes</taxon>
        <taxon>Agaricomycetidae</taxon>
        <taxon>Agaricales</taxon>
        <taxon>Agaricineae</taxon>
        <taxon>Hydnangiaceae</taxon>
        <taxon>Laccaria</taxon>
    </lineage>
</organism>
<dbReference type="EC" id="3.1.-.-" evidence="1"/>
<dbReference type="EMBL" id="DS547131">
    <property type="protein sequence ID" value="EDR02356.1"/>
    <property type="molecule type" value="Genomic_DNA"/>
</dbReference>
<dbReference type="RefSeq" id="XP_001887033.1">
    <property type="nucleotide sequence ID" value="XM_001886998.1"/>
</dbReference>
<dbReference type="SMR" id="B0DSN9"/>
<dbReference type="FunCoup" id="B0DSN9">
    <property type="interactions" value="757"/>
</dbReference>
<dbReference type="STRING" id="486041.B0DSN9"/>
<dbReference type="GeneID" id="6082671"/>
<dbReference type="KEGG" id="lbc:LACBIDRAFT_254074"/>
<dbReference type="HOGENOM" id="CLU_032444_2_0_1"/>
<dbReference type="InParanoid" id="B0DSN9"/>
<dbReference type="OrthoDB" id="1937206at2759"/>
<dbReference type="Proteomes" id="UP000001194">
    <property type="component" value="Unassembled WGS sequence"/>
</dbReference>
<dbReference type="GO" id="GO:0005739">
    <property type="term" value="C:mitochondrion"/>
    <property type="evidence" value="ECO:0007669"/>
    <property type="project" value="UniProtKB-SubCell"/>
</dbReference>
<dbReference type="GO" id="GO:0005730">
    <property type="term" value="C:nucleolus"/>
    <property type="evidence" value="ECO:0007669"/>
    <property type="project" value="UniProtKB-SubCell"/>
</dbReference>
<dbReference type="GO" id="GO:0005654">
    <property type="term" value="C:nucleoplasm"/>
    <property type="evidence" value="ECO:0007669"/>
    <property type="project" value="UniProtKB-SubCell"/>
</dbReference>
<dbReference type="GO" id="GO:0008409">
    <property type="term" value="F:5'-3' exonuclease activity"/>
    <property type="evidence" value="ECO:0007669"/>
    <property type="project" value="UniProtKB-UniRule"/>
</dbReference>
<dbReference type="GO" id="GO:0017108">
    <property type="term" value="F:5'-flap endonuclease activity"/>
    <property type="evidence" value="ECO:0007669"/>
    <property type="project" value="UniProtKB-UniRule"/>
</dbReference>
<dbReference type="GO" id="GO:0003677">
    <property type="term" value="F:DNA binding"/>
    <property type="evidence" value="ECO:0007669"/>
    <property type="project" value="UniProtKB-UniRule"/>
</dbReference>
<dbReference type="GO" id="GO:0000287">
    <property type="term" value="F:magnesium ion binding"/>
    <property type="evidence" value="ECO:0007669"/>
    <property type="project" value="UniProtKB-UniRule"/>
</dbReference>
<dbReference type="GO" id="GO:0006284">
    <property type="term" value="P:base-excision repair"/>
    <property type="evidence" value="ECO:0007669"/>
    <property type="project" value="UniProtKB-UniRule"/>
</dbReference>
<dbReference type="GO" id="GO:0043137">
    <property type="term" value="P:DNA replication, removal of RNA primer"/>
    <property type="evidence" value="ECO:0007669"/>
    <property type="project" value="UniProtKB-UniRule"/>
</dbReference>
<dbReference type="CDD" id="cd09907">
    <property type="entry name" value="H3TH_FEN1-Euk"/>
    <property type="match status" value="1"/>
</dbReference>
<dbReference type="CDD" id="cd09867">
    <property type="entry name" value="PIN_FEN1"/>
    <property type="match status" value="1"/>
</dbReference>
<dbReference type="FunFam" id="1.10.150.20:FF:000009">
    <property type="entry name" value="Flap endonuclease 1"/>
    <property type="match status" value="1"/>
</dbReference>
<dbReference type="FunFam" id="3.40.50.1010:FF:000003">
    <property type="entry name" value="Flap endonuclease 1"/>
    <property type="match status" value="1"/>
</dbReference>
<dbReference type="Gene3D" id="1.10.150.20">
    <property type="entry name" value="5' to 3' exonuclease, C-terminal subdomain"/>
    <property type="match status" value="1"/>
</dbReference>
<dbReference type="Gene3D" id="3.40.50.1010">
    <property type="entry name" value="5'-nuclease"/>
    <property type="match status" value="1"/>
</dbReference>
<dbReference type="HAMAP" id="MF_00614">
    <property type="entry name" value="Fen"/>
    <property type="match status" value="1"/>
</dbReference>
<dbReference type="InterPro" id="IPR036279">
    <property type="entry name" value="5-3_exonuclease_C_sf"/>
</dbReference>
<dbReference type="InterPro" id="IPR023426">
    <property type="entry name" value="Flap_endonuc"/>
</dbReference>
<dbReference type="InterPro" id="IPR008918">
    <property type="entry name" value="HhH2"/>
</dbReference>
<dbReference type="InterPro" id="IPR029060">
    <property type="entry name" value="PIN-like_dom_sf"/>
</dbReference>
<dbReference type="InterPro" id="IPR006086">
    <property type="entry name" value="XPG-I_dom"/>
</dbReference>
<dbReference type="InterPro" id="IPR006084">
    <property type="entry name" value="XPG/Rad2"/>
</dbReference>
<dbReference type="InterPro" id="IPR019974">
    <property type="entry name" value="XPG_CS"/>
</dbReference>
<dbReference type="InterPro" id="IPR006085">
    <property type="entry name" value="XPG_DNA_repair_N"/>
</dbReference>
<dbReference type="PANTHER" id="PTHR11081:SF9">
    <property type="entry name" value="FLAP ENDONUCLEASE 1"/>
    <property type="match status" value="1"/>
</dbReference>
<dbReference type="PANTHER" id="PTHR11081">
    <property type="entry name" value="FLAP ENDONUCLEASE FAMILY MEMBER"/>
    <property type="match status" value="1"/>
</dbReference>
<dbReference type="Pfam" id="PF00867">
    <property type="entry name" value="XPG_I"/>
    <property type="match status" value="1"/>
</dbReference>
<dbReference type="Pfam" id="PF00752">
    <property type="entry name" value="XPG_N"/>
    <property type="match status" value="1"/>
</dbReference>
<dbReference type="PRINTS" id="PR00853">
    <property type="entry name" value="XPGRADSUPER"/>
</dbReference>
<dbReference type="SMART" id="SM00279">
    <property type="entry name" value="HhH2"/>
    <property type="match status" value="1"/>
</dbReference>
<dbReference type="SMART" id="SM00484">
    <property type="entry name" value="XPGI"/>
    <property type="match status" value="1"/>
</dbReference>
<dbReference type="SMART" id="SM00485">
    <property type="entry name" value="XPGN"/>
    <property type="match status" value="1"/>
</dbReference>
<dbReference type="SUPFAM" id="SSF47807">
    <property type="entry name" value="5' to 3' exonuclease, C-terminal subdomain"/>
    <property type="match status" value="1"/>
</dbReference>
<dbReference type="SUPFAM" id="SSF88723">
    <property type="entry name" value="PIN domain-like"/>
    <property type="match status" value="1"/>
</dbReference>
<dbReference type="PROSITE" id="PS00841">
    <property type="entry name" value="XPG_1"/>
    <property type="match status" value="1"/>
</dbReference>
<dbReference type="PROSITE" id="PS00842">
    <property type="entry name" value="XPG_2"/>
    <property type="match status" value="1"/>
</dbReference>
<gene>
    <name evidence="1" type="primary">FEN11</name>
    <name type="ORF">LACBIDRAFT_254074</name>
</gene>
<sequence length="394" mass="43818">MGIKGLTGLLSQHAPKAIQEHEIKTLFGRKVAIDASMSIYQFLIAVRQKDGELLTNDAGETTSHLMGLFYRTLRIVENGIKPAYIFDGKPPELKKGVLSKRLERREEAKEEGEEAKETGTVEDVDRFSRRTVKVTREHNEECRRLLRLMGIPVVIAPSEAEAQCAELARGGKVYAAGSEDMDTLTFNAPILFRHLTFSEAKKQPISEINLKEALEGLDMNMSQFIDLCILLGCDYLEPIKGVGPKSALKLIREYGGLKGVVKHLRENSGCRGMQIPDEWPWEEAKKIFEKPDVLPADEVELEWTNPDVDGLVQFLVKEKGFNEDRVRKGAEKLQKFLNSKQQGRLDGFFSVKPKEKAAAPAPVGKAKGKGKVDAKAKGTKRKVGFLNSMSGPLA</sequence>
<reference key="1">
    <citation type="journal article" date="2008" name="Nature">
        <title>The genome of Laccaria bicolor provides insights into mycorrhizal symbiosis.</title>
        <authorList>
            <person name="Martin F."/>
            <person name="Aerts A."/>
            <person name="Ahren D."/>
            <person name="Brun A."/>
            <person name="Danchin E.G.J."/>
            <person name="Duchaussoy F."/>
            <person name="Gibon J."/>
            <person name="Kohler A."/>
            <person name="Lindquist E."/>
            <person name="Pereda V."/>
            <person name="Salamov A."/>
            <person name="Shapiro H.J."/>
            <person name="Wuyts J."/>
            <person name="Blaudez D."/>
            <person name="Buee M."/>
            <person name="Brokstein P."/>
            <person name="Canbaeck B."/>
            <person name="Cohen D."/>
            <person name="Courty P.E."/>
            <person name="Coutinho P.M."/>
            <person name="Delaruelle C."/>
            <person name="Detter J.C."/>
            <person name="Deveau A."/>
            <person name="DiFazio S."/>
            <person name="Duplessis S."/>
            <person name="Fraissinet-Tachet L."/>
            <person name="Lucic E."/>
            <person name="Frey-Klett P."/>
            <person name="Fourrey C."/>
            <person name="Feussner I."/>
            <person name="Gay G."/>
            <person name="Grimwood J."/>
            <person name="Hoegger P.J."/>
            <person name="Jain P."/>
            <person name="Kilaru S."/>
            <person name="Labbe J."/>
            <person name="Lin Y.C."/>
            <person name="Legue V."/>
            <person name="Le Tacon F."/>
            <person name="Marmeisse R."/>
            <person name="Melayah D."/>
            <person name="Montanini B."/>
            <person name="Muratet M."/>
            <person name="Nehls U."/>
            <person name="Niculita-Hirzel H."/>
            <person name="Oudot-Le Secq M.P."/>
            <person name="Peter M."/>
            <person name="Quesneville H."/>
            <person name="Rajashekar B."/>
            <person name="Reich M."/>
            <person name="Rouhier N."/>
            <person name="Schmutz J."/>
            <person name="Yin T."/>
            <person name="Chalot M."/>
            <person name="Henrissat B."/>
            <person name="Kuees U."/>
            <person name="Lucas S."/>
            <person name="Van de Peer Y."/>
            <person name="Podila G.K."/>
            <person name="Polle A."/>
            <person name="Pukkila P.J."/>
            <person name="Richardson P.M."/>
            <person name="Rouze P."/>
            <person name="Sanders I.R."/>
            <person name="Stajich J.E."/>
            <person name="Tunlid A."/>
            <person name="Tuskan G."/>
            <person name="Grigoriev I.V."/>
        </authorList>
    </citation>
    <scope>NUCLEOTIDE SEQUENCE [LARGE SCALE GENOMIC DNA]</scope>
    <source>
        <strain>S238N-H82 / ATCC MYA-4686</strain>
    </source>
</reference>
<keyword id="KW-0227">DNA damage</keyword>
<keyword id="KW-0234">DNA repair</keyword>
<keyword id="KW-0235">DNA replication</keyword>
<keyword id="KW-0255">Endonuclease</keyword>
<keyword id="KW-0269">Exonuclease</keyword>
<keyword id="KW-0378">Hydrolase</keyword>
<keyword id="KW-0460">Magnesium</keyword>
<keyword id="KW-0479">Metal-binding</keyword>
<keyword id="KW-0496">Mitochondrion</keyword>
<keyword id="KW-0540">Nuclease</keyword>
<keyword id="KW-0539">Nucleus</keyword>
<keyword id="KW-0597">Phosphoprotein</keyword>
<keyword id="KW-1185">Reference proteome</keyword>
<comment type="function">
    <text evidence="1">Structure-specific nuclease with 5'-flap endonuclease and 5'-3' exonuclease activities involved in DNA replication and repair. During DNA replication, cleaves the 5'-overhanging flap structure that is generated by displacement synthesis when DNA polymerase encounters the 5'-end of a downstream Okazaki fragment. It enters the flap from the 5'-end and then tracks to cleave the flap base, leaving a nick for ligation. Also involved in the long patch base excision repair (LP-BER) pathway, by cleaving within the apurinic/apyrimidinic (AP) site-terminated flap. Acts as a genome stabilization factor that prevents flaps from equilibrating into structures that lead to duplications and deletions. Also possesses 5'-3' exonuclease activity on nicked or gapped double-stranded DNA, and exhibits RNase H activity. Also involved in replication and repair of rDNA and in repairing mitochondrial DNA.</text>
</comment>
<comment type="cofactor">
    <cofactor evidence="1">
        <name>Mg(2+)</name>
        <dbReference type="ChEBI" id="CHEBI:18420"/>
    </cofactor>
    <text evidence="1">Binds 2 magnesium ions per subunit. They probably participate in the reaction catalyzed by the enzyme. May bind an additional third magnesium ion after substrate binding.</text>
</comment>
<comment type="subunit">
    <text evidence="1">Interacts with PCNA. Three molecules of FEN1 bind to one PCNA trimer with each molecule binding to one PCNA monomer. PCNA stimulates the nuclease activity without altering cleavage specificity.</text>
</comment>
<comment type="subcellular location">
    <subcellularLocation>
        <location evidence="1">Nucleus</location>
        <location evidence="1">Nucleolus</location>
    </subcellularLocation>
    <subcellularLocation>
        <location evidence="1">Nucleus</location>
        <location evidence="1">Nucleoplasm</location>
    </subcellularLocation>
    <subcellularLocation>
        <location evidence="1">Mitochondrion</location>
    </subcellularLocation>
    <text evidence="1">Resides mostly in the nucleoli and relocalizes to the nucleoplasm upon DNA damage.</text>
</comment>
<comment type="PTM">
    <text evidence="1">Phosphorylated. Phosphorylation upon DNA damage induces relocalization to the nuclear plasma.</text>
</comment>
<comment type="similarity">
    <text evidence="1">Belongs to the XPG/RAD2 endonuclease family. FEN1 subfamily.</text>
</comment>
<evidence type="ECO:0000255" key="1">
    <source>
        <dbReference type="HAMAP-Rule" id="MF_03140"/>
    </source>
</evidence>
<evidence type="ECO:0000256" key="2">
    <source>
        <dbReference type="SAM" id="MobiDB-lite"/>
    </source>
</evidence>
<proteinExistence type="inferred from homology"/>
<accession>B0DSN9</accession>
<protein>
    <recommendedName>
        <fullName evidence="1">Flap endonuclease 1-A</fullName>
        <shortName evidence="1">FEN-1-A</shortName>
        <ecNumber evidence="1">3.1.-.-</ecNumber>
    </recommendedName>
    <alternativeName>
        <fullName evidence="1">Flap structure-specific endonuclease 1-A</fullName>
    </alternativeName>
</protein>
<feature type="chain" id="PRO_0000403580" description="Flap endonuclease 1-A">
    <location>
        <begin position="1"/>
        <end position="394"/>
    </location>
</feature>
<feature type="region of interest" description="N-domain">
    <location>
        <begin position="1"/>
        <end position="105"/>
    </location>
</feature>
<feature type="region of interest" description="I-domain">
    <location>
        <begin position="123"/>
        <end position="254"/>
    </location>
</feature>
<feature type="region of interest" description="Interaction with PCNA" evidence="1">
    <location>
        <begin position="341"/>
        <end position="349"/>
    </location>
</feature>
<feature type="region of interest" description="Disordered" evidence="2">
    <location>
        <begin position="356"/>
        <end position="375"/>
    </location>
</feature>
<feature type="binding site" evidence="1">
    <location>
        <position position="34"/>
    </location>
    <ligand>
        <name>Mg(2+)</name>
        <dbReference type="ChEBI" id="CHEBI:18420"/>
        <label>1</label>
    </ligand>
</feature>
<feature type="binding site" evidence="1">
    <location>
        <position position="47"/>
    </location>
    <ligand>
        <name>DNA</name>
        <dbReference type="ChEBI" id="CHEBI:16991"/>
    </ligand>
</feature>
<feature type="binding site" evidence="1">
    <location>
        <position position="71"/>
    </location>
    <ligand>
        <name>DNA</name>
        <dbReference type="ChEBI" id="CHEBI:16991"/>
    </ligand>
</feature>
<feature type="binding site" evidence="1">
    <location>
        <position position="87"/>
    </location>
    <ligand>
        <name>Mg(2+)</name>
        <dbReference type="ChEBI" id="CHEBI:18420"/>
        <label>1</label>
    </ligand>
</feature>
<feature type="binding site" evidence="1">
    <location>
        <position position="159"/>
    </location>
    <ligand>
        <name>DNA</name>
        <dbReference type="ChEBI" id="CHEBI:16991"/>
    </ligand>
</feature>
<feature type="binding site" evidence="1">
    <location>
        <position position="159"/>
    </location>
    <ligand>
        <name>Mg(2+)</name>
        <dbReference type="ChEBI" id="CHEBI:18420"/>
        <label>1</label>
    </ligand>
</feature>
<feature type="binding site" evidence="1">
    <location>
        <position position="161"/>
    </location>
    <ligand>
        <name>Mg(2+)</name>
        <dbReference type="ChEBI" id="CHEBI:18420"/>
        <label>1</label>
    </ligand>
</feature>
<feature type="binding site" evidence="1">
    <location>
        <position position="180"/>
    </location>
    <ligand>
        <name>Mg(2+)</name>
        <dbReference type="ChEBI" id="CHEBI:18420"/>
        <label>2</label>
    </ligand>
</feature>
<feature type="binding site" evidence="1">
    <location>
        <position position="182"/>
    </location>
    <ligand>
        <name>Mg(2+)</name>
        <dbReference type="ChEBI" id="CHEBI:18420"/>
        <label>2</label>
    </ligand>
</feature>
<feature type="binding site" evidence="1">
    <location>
        <position position="232"/>
    </location>
    <ligand>
        <name>DNA</name>
        <dbReference type="ChEBI" id="CHEBI:16991"/>
    </ligand>
</feature>
<feature type="binding site" evidence="1">
    <location>
        <position position="234"/>
    </location>
    <ligand>
        <name>DNA</name>
        <dbReference type="ChEBI" id="CHEBI:16991"/>
    </ligand>
</feature>
<feature type="binding site" evidence="1">
    <location>
        <position position="234"/>
    </location>
    <ligand>
        <name>Mg(2+)</name>
        <dbReference type="ChEBI" id="CHEBI:18420"/>
        <label>2</label>
    </ligand>
</feature>
<name>FEN11_LACBS</name>